<proteinExistence type="inferred from homology"/>
<feature type="chain" id="PRO_0000128650" description="Polyphosphate kinase">
    <location>
        <begin position="1"/>
        <end position="685"/>
    </location>
</feature>
<feature type="active site" description="Phosphohistidine intermediate" evidence="1">
    <location>
        <position position="435"/>
    </location>
</feature>
<feature type="binding site" evidence="1">
    <location>
        <position position="45"/>
    </location>
    <ligand>
        <name>ATP</name>
        <dbReference type="ChEBI" id="CHEBI:30616"/>
    </ligand>
</feature>
<feature type="binding site" evidence="1">
    <location>
        <position position="375"/>
    </location>
    <ligand>
        <name>Mg(2+)</name>
        <dbReference type="ChEBI" id="CHEBI:18420"/>
    </ligand>
</feature>
<feature type="binding site" evidence="1">
    <location>
        <position position="405"/>
    </location>
    <ligand>
        <name>Mg(2+)</name>
        <dbReference type="ChEBI" id="CHEBI:18420"/>
    </ligand>
</feature>
<feature type="binding site" evidence="1">
    <location>
        <position position="468"/>
    </location>
    <ligand>
        <name>ATP</name>
        <dbReference type="ChEBI" id="CHEBI:30616"/>
    </ligand>
</feature>
<feature type="binding site" evidence="1">
    <location>
        <position position="564"/>
    </location>
    <ligand>
        <name>ATP</name>
        <dbReference type="ChEBI" id="CHEBI:30616"/>
    </ligand>
</feature>
<feature type="binding site" evidence="1">
    <location>
        <position position="592"/>
    </location>
    <ligand>
        <name>ATP</name>
        <dbReference type="ChEBI" id="CHEBI:30616"/>
    </ligand>
</feature>
<protein>
    <recommendedName>
        <fullName evidence="1">Polyphosphate kinase</fullName>
        <ecNumber evidence="1">2.7.4.1</ecNumber>
    </recommendedName>
    <alternativeName>
        <fullName evidence="1">ATP-polyphosphate phosphotransferase</fullName>
    </alternativeName>
    <alternativeName>
        <fullName evidence="1">Polyphosphoric acid kinase</fullName>
    </alternativeName>
</protein>
<dbReference type="EC" id="2.7.4.1" evidence="1"/>
<dbReference type="EMBL" id="AL157959">
    <property type="protein sequence ID" value="CAM07831.1"/>
    <property type="molecule type" value="Genomic_DNA"/>
</dbReference>
<dbReference type="PIR" id="C81974">
    <property type="entry name" value="C81974"/>
</dbReference>
<dbReference type="SMR" id="Q9JW42"/>
<dbReference type="EnsemblBacteria" id="CAM07831">
    <property type="protein sequence ID" value="CAM07831"/>
    <property type="gene ID" value="NMA0555"/>
</dbReference>
<dbReference type="KEGG" id="nma:NMA0555"/>
<dbReference type="HOGENOM" id="CLU_009678_4_2_4"/>
<dbReference type="Proteomes" id="UP000000626">
    <property type="component" value="Chromosome"/>
</dbReference>
<dbReference type="GO" id="GO:0009358">
    <property type="term" value="C:polyphosphate kinase complex"/>
    <property type="evidence" value="ECO:0007669"/>
    <property type="project" value="InterPro"/>
</dbReference>
<dbReference type="GO" id="GO:0005524">
    <property type="term" value="F:ATP binding"/>
    <property type="evidence" value="ECO:0007669"/>
    <property type="project" value="UniProtKB-KW"/>
</dbReference>
<dbReference type="GO" id="GO:0046872">
    <property type="term" value="F:metal ion binding"/>
    <property type="evidence" value="ECO:0007669"/>
    <property type="project" value="UniProtKB-KW"/>
</dbReference>
<dbReference type="GO" id="GO:0008976">
    <property type="term" value="F:polyphosphate kinase activity"/>
    <property type="evidence" value="ECO:0007669"/>
    <property type="project" value="UniProtKB-UniRule"/>
</dbReference>
<dbReference type="GO" id="GO:0006799">
    <property type="term" value="P:polyphosphate biosynthetic process"/>
    <property type="evidence" value="ECO:0007669"/>
    <property type="project" value="UniProtKB-UniRule"/>
</dbReference>
<dbReference type="CDD" id="cd09165">
    <property type="entry name" value="PLDc_PaPPK1_C1_like"/>
    <property type="match status" value="1"/>
</dbReference>
<dbReference type="CDD" id="cd09168">
    <property type="entry name" value="PLDc_PaPPK1_C2_like"/>
    <property type="match status" value="1"/>
</dbReference>
<dbReference type="Gene3D" id="3.30.870.10">
    <property type="entry name" value="Endonuclease Chain A"/>
    <property type="match status" value="2"/>
</dbReference>
<dbReference type="Gene3D" id="3.30.1840.10">
    <property type="entry name" value="Polyphosphate kinase middle domain"/>
    <property type="match status" value="1"/>
</dbReference>
<dbReference type="Gene3D" id="1.20.58.310">
    <property type="entry name" value="Polyphosphate kinase N-terminal domain"/>
    <property type="match status" value="1"/>
</dbReference>
<dbReference type="HAMAP" id="MF_00347">
    <property type="entry name" value="Polyphosphate_kinase"/>
    <property type="match status" value="1"/>
</dbReference>
<dbReference type="InterPro" id="IPR003414">
    <property type="entry name" value="PP_kinase"/>
</dbReference>
<dbReference type="InterPro" id="IPR041108">
    <property type="entry name" value="PP_kinase_C_1"/>
</dbReference>
<dbReference type="InterPro" id="IPR024953">
    <property type="entry name" value="PP_kinase_middle"/>
</dbReference>
<dbReference type="InterPro" id="IPR036830">
    <property type="entry name" value="PP_kinase_middle_dom_sf"/>
</dbReference>
<dbReference type="InterPro" id="IPR025200">
    <property type="entry name" value="PPK_C_dom2"/>
</dbReference>
<dbReference type="InterPro" id="IPR025198">
    <property type="entry name" value="PPK_N_dom"/>
</dbReference>
<dbReference type="InterPro" id="IPR036832">
    <property type="entry name" value="PPK_N_dom_sf"/>
</dbReference>
<dbReference type="NCBIfam" id="TIGR03705">
    <property type="entry name" value="poly_P_kin"/>
    <property type="match status" value="1"/>
</dbReference>
<dbReference type="NCBIfam" id="NF003917">
    <property type="entry name" value="PRK05443.1-1"/>
    <property type="match status" value="1"/>
</dbReference>
<dbReference type="NCBIfam" id="NF003918">
    <property type="entry name" value="PRK05443.1-2"/>
    <property type="match status" value="1"/>
</dbReference>
<dbReference type="NCBIfam" id="NF003921">
    <property type="entry name" value="PRK05443.2-2"/>
    <property type="match status" value="1"/>
</dbReference>
<dbReference type="PANTHER" id="PTHR30218">
    <property type="entry name" value="POLYPHOSPHATE KINASE"/>
    <property type="match status" value="1"/>
</dbReference>
<dbReference type="PANTHER" id="PTHR30218:SF0">
    <property type="entry name" value="POLYPHOSPHATE KINASE"/>
    <property type="match status" value="1"/>
</dbReference>
<dbReference type="Pfam" id="PF02503">
    <property type="entry name" value="PP_kinase"/>
    <property type="match status" value="1"/>
</dbReference>
<dbReference type="Pfam" id="PF13090">
    <property type="entry name" value="PP_kinase_C"/>
    <property type="match status" value="1"/>
</dbReference>
<dbReference type="Pfam" id="PF17941">
    <property type="entry name" value="PP_kinase_C_1"/>
    <property type="match status" value="1"/>
</dbReference>
<dbReference type="Pfam" id="PF13089">
    <property type="entry name" value="PP_kinase_N"/>
    <property type="match status" value="1"/>
</dbReference>
<dbReference type="PIRSF" id="PIRSF015589">
    <property type="entry name" value="PP_kinase"/>
    <property type="match status" value="1"/>
</dbReference>
<dbReference type="SUPFAM" id="SSF56024">
    <property type="entry name" value="Phospholipase D/nuclease"/>
    <property type="match status" value="2"/>
</dbReference>
<dbReference type="SUPFAM" id="SSF143724">
    <property type="entry name" value="PHP14-like"/>
    <property type="match status" value="1"/>
</dbReference>
<dbReference type="SUPFAM" id="SSF140356">
    <property type="entry name" value="PPK N-terminal domain-like"/>
    <property type="match status" value="1"/>
</dbReference>
<sequence>MPEQNRILCRELSLLAFNRRVLAQAEDKNVPLLERLRFLCIVSSNLDEFFEVRMAWLKRENKLHPRRRLDNGKMPSETIADVTEAARSLIRHQYDLFNNVLQPELARESIHFYRRRNWTGAQKKWIEDYFDRELLPILTPIGLDPSHPFPRPLNKSLNFAVELDGTDAFGRPSGMAIVQAPRILPRVVPLPSELCGGGHGFVFLSSILHAHVGKLFPGMNVKGCHQFRLTRDSDLTVDEEDLQNLRAAIQNELHDREYGDGVRLEVADTCPAYIRDFLLAQFKLTAAELYQVKGPVNLVRLNAVPDLVNRPDLKFPTHTPGRLKALGKTASIFDLVRQSPILLHHPYQSFDPVVEMMREAAADPDVLAVKMTIYRTGTRSELVRALMKAALAGKQVTVVVELMARFDEANNVNWAKQLEEAGAHVVYGVFGYKVHAKMALVIRREDGVLKRYAHLGTGNYHQGTSRIYTDFGIITADEQITADVNTLFMEITGLGKPGRLNKLYQSPFTLHKMVIDRIARETEHAKAGKPARITAKMNSLIEPTVIEALYRASAAGVQIDLIVRGMCTLRPGVKGLSENIRVRSIIGRQLEHARVYCFHNNGADDTFISSADWMGRNFFRRIETAAPITAPELKKRVIREGLEMALADNTHAWLMQPDGGYIRAAPAEGESEADLQNDLWTLLGG</sequence>
<keyword id="KW-0067">ATP-binding</keyword>
<keyword id="KW-0418">Kinase</keyword>
<keyword id="KW-0460">Magnesium</keyword>
<keyword id="KW-0479">Metal-binding</keyword>
<keyword id="KW-0547">Nucleotide-binding</keyword>
<keyword id="KW-0597">Phosphoprotein</keyword>
<keyword id="KW-0808">Transferase</keyword>
<evidence type="ECO:0000255" key="1">
    <source>
        <dbReference type="HAMAP-Rule" id="MF_00347"/>
    </source>
</evidence>
<gene>
    <name evidence="1" type="primary">ppk</name>
    <name type="ordered locus">NMA0555</name>
</gene>
<reference key="1">
    <citation type="journal article" date="2000" name="Nature">
        <title>Complete DNA sequence of a serogroup A strain of Neisseria meningitidis Z2491.</title>
        <authorList>
            <person name="Parkhill J."/>
            <person name="Achtman M."/>
            <person name="James K.D."/>
            <person name="Bentley S.D."/>
            <person name="Churcher C.M."/>
            <person name="Klee S.R."/>
            <person name="Morelli G."/>
            <person name="Basham D."/>
            <person name="Brown D."/>
            <person name="Chillingworth T."/>
            <person name="Davies R.M."/>
            <person name="Davis P."/>
            <person name="Devlin K."/>
            <person name="Feltwell T."/>
            <person name="Hamlin N."/>
            <person name="Holroyd S."/>
            <person name="Jagels K."/>
            <person name="Leather S."/>
            <person name="Moule S."/>
            <person name="Mungall K.L."/>
            <person name="Quail M.A."/>
            <person name="Rajandream M.A."/>
            <person name="Rutherford K.M."/>
            <person name="Simmonds M."/>
            <person name="Skelton J."/>
            <person name="Whitehead S."/>
            <person name="Spratt B.G."/>
            <person name="Barrell B.G."/>
        </authorList>
    </citation>
    <scope>NUCLEOTIDE SEQUENCE [LARGE SCALE GENOMIC DNA]</scope>
    <source>
        <strain>DSM 15465 / Z2491</strain>
    </source>
</reference>
<organism>
    <name type="scientific">Neisseria meningitidis serogroup A / serotype 4A (strain DSM 15465 / Z2491)</name>
    <dbReference type="NCBI Taxonomy" id="122587"/>
    <lineage>
        <taxon>Bacteria</taxon>
        <taxon>Pseudomonadati</taxon>
        <taxon>Pseudomonadota</taxon>
        <taxon>Betaproteobacteria</taxon>
        <taxon>Neisseriales</taxon>
        <taxon>Neisseriaceae</taxon>
        <taxon>Neisseria</taxon>
    </lineage>
</organism>
<name>PPK1_NEIMA</name>
<comment type="function">
    <text evidence="1">Catalyzes the reversible transfer of the terminal phosphate of ATP to form a long-chain polyphosphate (polyP).</text>
</comment>
<comment type="catalytic activity">
    <reaction evidence="1">
        <text>[phosphate](n) + ATP = [phosphate](n+1) + ADP</text>
        <dbReference type="Rhea" id="RHEA:19573"/>
        <dbReference type="Rhea" id="RHEA-COMP:9859"/>
        <dbReference type="Rhea" id="RHEA-COMP:14280"/>
        <dbReference type="ChEBI" id="CHEBI:16838"/>
        <dbReference type="ChEBI" id="CHEBI:30616"/>
        <dbReference type="ChEBI" id="CHEBI:456216"/>
        <dbReference type="EC" id="2.7.4.1"/>
    </reaction>
</comment>
<comment type="cofactor">
    <cofactor evidence="1">
        <name>Mg(2+)</name>
        <dbReference type="ChEBI" id="CHEBI:18420"/>
    </cofactor>
</comment>
<comment type="PTM">
    <text evidence="1">An intermediate of this reaction is the autophosphorylated ppk in which a phosphate is covalently linked to a histidine residue through a N-P bond.</text>
</comment>
<comment type="similarity">
    <text evidence="1">Belongs to the polyphosphate kinase 1 (PPK1) family.</text>
</comment>
<accession>Q9JW42</accession>
<accession>A1IQ06</accession>